<sequence length="33" mass="3823">ETLSSARFRCKPNSEWRTQIPLFPQEVEACVLS</sequence>
<organism>
    <name type="scientific">Escherichia phage BZ13</name>
    <name type="common">Bacteriophage BZ13</name>
    <dbReference type="NCBI Taxonomy" id="329853"/>
    <lineage>
        <taxon>Viruses</taxon>
        <taxon>Riboviria</taxon>
        <taxon>Orthornavirae</taxon>
        <taxon>Lenarviricota</taxon>
        <taxon>Leviviricetes</taxon>
        <taxon>Norzivirales</taxon>
        <taxon>Fiersviridae</taxon>
        <taxon>Emesvirus</taxon>
    </lineage>
</organism>
<keyword id="KW-0548">Nucleotidyltransferase</keyword>
<keyword id="KW-0696">RNA-directed RNA polymerase</keyword>
<keyword id="KW-0808">Transferase</keyword>
<comment type="function">
    <text>This enzyme is part of the viral RNA-dependent RNA polymerase complex.</text>
</comment>
<comment type="catalytic activity">
    <reaction>
        <text>RNA(n) + a ribonucleoside 5'-triphosphate = RNA(n+1) + diphosphate</text>
        <dbReference type="Rhea" id="RHEA:21248"/>
        <dbReference type="Rhea" id="RHEA-COMP:14527"/>
        <dbReference type="Rhea" id="RHEA-COMP:17342"/>
        <dbReference type="ChEBI" id="CHEBI:33019"/>
        <dbReference type="ChEBI" id="CHEBI:61557"/>
        <dbReference type="ChEBI" id="CHEBI:140395"/>
        <dbReference type="EC" id="2.7.7.48"/>
    </reaction>
</comment>
<comment type="subunit">
    <text>The polymerase complex is composed of four chains, the three other proteins of the complex (alpha, gamma, and delta chains) are supplied by the host cell.</text>
</comment>
<name>RDRP_BPBZ1</name>
<accession>P09674</accession>
<feature type="chain" id="PRO_0000164850" description="RNA-directed RNA polymerase beta chain">
    <location>
        <begin position="1" status="less than"/>
        <end position="33"/>
    </location>
</feature>
<feature type="non-terminal residue">
    <location>
        <position position="1"/>
    </location>
</feature>
<dbReference type="EC" id="2.7.7.48"/>
<dbReference type="EMBL" id="J02446">
    <property type="status" value="NOT_ANNOTATED_CDS"/>
    <property type="molecule type" value="Genomic_RNA"/>
</dbReference>
<dbReference type="PIR" id="S13982">
    <property type="entry name" value="S13982"/>
</dbReference>
<dbReference type="GO" id="GO:0003968">
    <property type="term" value="F:RNA-directed RNA polymerase activity"/>
    <property type="evidence" value="ECO:0007669"/>
    <property type="project" value="UniProtKB-KW"/>
</dbReference>
<protein>
    <recommendedName>
        <fullName>RNA-directed RNA polymerase beta chain</fullName>
        <ecNumber>2.7.7.48</ecNumber>
    </recommendedName>
    <alternativeName>
        <fullName>RNA replicase beta chain</fullName>
    </alternativeName>
</protein>
<reference key="1">
    <citation type="journal article" date="1982" name="J. Mol. Biol.">
        <title>Comparison of the nucleotide sequences at the 3'-terminal region of RNAs from RNA coliphages.</title>
        <authorList>
            <person name="Inokuchi Y."/>
            <person name="Hirashima A."/>
            <person name="Watanabe I."/>
        </authorList>
    </citation>
    <scope>NUCLEOTIDE SEQUENCE [GENOMIC RNA]</scope>
</reference>
<organismHost>
    <name type="scientific">Escherichia coli</name>
    <dbReference type="NCBI Taxonomy" id="562"/>
</organismHost>
<proteinExistence type="predicted"/>